<comment type="function">
    <text evidence="2">Component of the replisome and is required for rad3-dependent activation of the checkpoint kinase cds1 in response to replication fork arrest. Phosphorylation allows it to mediate the activation of cds1.</text>
</comment>
<comment type="subunit">
    <text evidence="2">Interacts with cds1.</text>
</comment>
<comment type="subcellular location">
    <subcellularLocation>
        <location evidence="2">Nucleus</location>
    </subcellularLocation>
    <text>Associated with chromatin.</text>
</comment>
<comment type="PTM">
    <text evidence="2">Phosphorylated by rad3 and tel1.</text>
</comment>
<name>MRC1_SCHPO</name>
<reference key="1">
    <citation type="journal article" date="2002" name="Nature">
        <title>The genome sequence of Schizosaccharomyces pombe.</title>
        <authorList>
            <person name="Wood V."/>
            <person name="Gwilliam R."/>
            <person name="Rajandream M.A."/>
            <person name="Lyne M.H."/>
            <person name="Lyne R."/>
            <person name="Stewart A."/>
            <person name="Sgouros J.G."/>
            <person name="Peat N."/>
            <person name="Hayles J."/>
            <person name="Baker S.G."/>
            <person name="Basham D."/>
            <person name="Bowman S."/>
            <person name="Brooks K."/>
            <person name="Brown D."/>
            <person name="Brown S."/>
            <person name="Chillingworth T."/>
            <person name="Churcher C.M."/>
            <person name="Collins M."/>
            <person name="Connor R."/>
            <person name="Cronin A."/>
            <person name="Davis P."/>
            <person name="Feltwell T."/>
            <person name="Fraser A."/>
            <person name="Gentles S."/>
            <person name="Goble A."/>
            <person name="Hamlin N."/>
            <person name="Harris D.E."/>
            <person name="Hidalgo J."/>
            <person name="Hodgson G."/>
            <person name="Holroyd S."/>
            <person name="Hornsby T."/>
            <person name="Howarth S."/>
            <person name="Huckle E.J."/>
            <person name="Hunt S."/>
            <person name="Jagels K."/>
            <person name="James K.D."/>
            <person name="Jones L."/>
            <person name="Jones M."/>
            <person name="Leather S."/>
            <person name="McDonald S."/>
            <person name="McLean J."/>
            <person name="Mooney P."/>
            <person name="Moule S."/>
            <person name="Mungall K.L."/>
            <person name="Murphy L.D."/>
            <person name="Niblett D."/>
            <person name="Odell C."/>
            <person name="Oliver K."/>
            <person name="O'Neil S."/>
            <person name="Pearson D."/>
            <person name="Quail M.A."/>
            <person name="Rabbinowitsch E."/>
            <person name="Rutherford K.M."/>
            <person name="Rutter S."/>
            <person name="Saunders D."/>
            <person name="Seeger K."/>
            <person name="Sharp S."/>
            <person name="Skelton J."/>
            <person name="Simmonds M.N."/>
            <person name="Squares R."/>
            <person name="Squares S."/>
            <person name="Stevens K."/>
            <person name="Taylor K."/>
            <person name="Taylor R.G."/>
            <person name="Tivey A."/>
            <person name="Walsh S.V."/>
            <person name="Warren T."/>
            <person name="Whitehead S."/>
            <person name="Woodward J.R."/>
            <person name="Volckaert G."/>
            <person name="Aert R."/>
            <person name="Robben J."/>
            <person name="Grymonprez B."/>
            <person name="Weltjens I."/>
            <person name="Vanstreels E."/>
            <person name="Rieger M."/>
            <person name="Schaefer M."/>
            <person name="Mueller-Auer S."/>
            <person name="Gabel C."/>
            <person name="Fuchs M."/>
            <person name="Duesterhoeft A."/>
            <person name="Fritzc C."/>
            <person name="Holzer E."/>
            <person name="Moestl D."/>
            <person name="Hilbert H."/>
            <person name="Borzym K."/>
            <person name="Langer I."/>
            <person name="Beck A."/>
            <person name="Lehrach H."/>
            <person name="Reinhardt R."/>
            <person name="Pohl T.M."/>
            <person name="Eger P."/>
            <person name="Zimmermann W."/>
            <person name="Wedler H."/>
            <person name="Wambutt R."/>
            <person name="Purnelle B."/>
            <person name="Goffeau A."/>
            <person name="Cadieu E."/>
            <person name="Dreano S."/>
            <person name="Gloux S."/>
            <person name="Lelaure V."/>
            <person name="Mottier S."/>
            <person name="Galibert F."/>
            <person name="Aves S.J."/>
            <person name="Xiang Z."/>
            <person name="Hunt C."/>
            <person name="Moore K."/>
            <person name="Hurst S.M."/>
            <person name="Lucas M."/>
            <person name="Rochet M."/>
            <person name="Gaillardin C."/>
            <person name="Tallada V.A."/>
            <person name="Garzon A."/>
            <person name="Thode G."/>
            <person name="Daga R.R."/>
            <person name="Cruzado L."/>
            <person name="Jimenez J."/>
            <person name="Sanchez M."/>
            <person name="del Rey F."/>
            <person name="Benito J."/>
            <person name="Dominguez A."/>
            <person name="Revuelta J.L."/>
            <person name="Moreno S."/>
            <person name="Armstrong J."/>
            <person name="Forsburg S.L."/>
            <person name="Cerutti L."/>
            <person name="Lowe T."/>
            <person name="McCombie W.R."/>
            <person name="Paulsen I."/>
            <person name="Potashkin J."/>
            <person name="Shpakovski G.V."/>
            <person name="Ussery D."/>
            <person name="Barrell B.G."/>
            <person name="Nurse P."/>
        </authorList>
    </citation>
    <scope>NUCLEOTIDE SEQUENCE [LARGE SCALE GENOMIC DNA]</scope>
    <source>
        <strain>972 / ATCC 24843</strain>
    </source>
</reference>
<reference key="2">
    <citation type="journal article" date="2003" name="Mol. Cell. Biol.">
        <title>Replication checkpoint protein Mrc1 is regulated by Rad3 and Tel1 in fission yeast.</title>
        <authorList>
            <person name="Zhao H."/>
            <person name="Tanaka K."/>
            <person name="Nogochi E."/>
            <person name="Nogochi C."/>
            <person name="Russell P."/>
        </authorList>
    </citation>
    <scope>FUNCTION</scope>
    <scope>INTERACTION WITH CDS1</scope>
    <scope>SUBCELLULAR LOCATION</scope>
    <scope>PHOSPHORYLATION AT SER-604 AND THR-645</scope>
    <scope>MUTAGENESIS OF SER-599; SER-604; SER-614; THR-634; SER-637 AND THR-645</scope>
</reference>
<keyword id="KW-0235">DNA replication</keyword>
<keyword id="KW-0539">Nucleus</keyword>
<keyword id="KW-0597">Phosphoprotein</keyword>
<keyword id="KW-1185">Reference proteome</keyword>
<sequence length="1019" mass="114319">MASLDENADELHRMDSSDEASINDDQEDILDTPRTRVRKMLASVDMQLSSNAVSEASLDKESTVGNLENQKNRSYSSEIYLHSDTNFLSNFDSAYERVRRLLNQQGGKSSLQKKEVEQIETQEGGDNAKGSPSSENKDSDRNSRLQQLIEKKRNALKKEQEDLIQNSATSHSKSDNLDSESADDSDLADESELSKKYTSDRKIRNASKKALLELHRNTARLTRETALKPEVVVKKKVTLREFFQKIGFKNDNQLENKAISEEEANSTEPPNVEKEEPKPSVDRSTGIVNSEDIKELSVEDDSLELKEITPEALDIGQTSLFTTLNQTQVKKEDNKKFLLKEINAKLNEDDIDSELEIEVKPKTTALDNIEKSKLSEENEHGIKGKLKQLAEIKLSKDGKPFENEFNIKSFNRNLVKRAAVMAKLQRNQLEEELKAKGIYKPTIQGEKEEEEDPLERARNDAEKIRQLEKASGNASDEGELNDEEEVISSSNTPSTKAKTTNKVIISDVIIEATQAEPKRRQKNSRVVFDEEDLTGDSHGSSNMKISESDDESNGDMIRDSFDRLSSESIKDSQKTEELHDSFGINDEVDQSTSLYVQNSQPSASQLTIVDATYSQPPPRWESSSRDDKTNTSSTQPSQVDSLVPTQLDSTIPTQIDSVQRNKDQDDEEILEERRESRRDSKTFLSRTMLYNKDTGKADSAWASDLIEEQAIESDDEYAGIGGLSDDGLSDSDAELEVQNMIDDETTIQKGEVASMAQFAKDQEMDRDEKLVKQLMKDVTTGALRKRNRNGFAALDDSDDEDYSNLRREKLKELRRQKLLEDGNLNVLEGDKRKAFLATVEDSLVSSKDNLTWLDATVEDSGVGSSDLGDEYLYSEQSLNHEEEEQMEEELSEIFSSGGPNVVDRVYLKKSSTRHTSDNNSLEEVLPIFPGVRKLVSNSQSEKIGDLSNDNSMGAKSYKTPIISSTQRPQGRKFRGLMNQSSKADISRTVDAGSIKVVPNSQSANPPRLLASLNNYSDFD</sequence>
<feature type="chain" id="PRO_0000096573" description="Mediator of replication checkpoint protein 1">
    <location>
        <begin position="1"/>
        <end position="1019"/>
    </location>
</feature>
<feature type="region of interest" description="Disordered" evidence="1">
    <location>
        <begin position="1"/>
        <end position="33"/>
    </location>
</feature>
<feature type="region of interest" description="Disordered" evidence="1">
    <location>
        <begin position="105"/>
        <end position="143"/>
    </location>
</feature>
<feature type="region of interest" description="Disordered" evidence="1">
    <location>
        <begin position="166"/>
        <end position="202"/>
    </location>
</feature>
<feature type="region of interest" description="Disordered" evidence="1">
    <location>
        <begin position="261"/>
        <end position="290"/>
    </location>
</feature>
<feature type="region of interest" description="Disordered" evidence="1">
    <location>
        <begin position="443"/>
        <end position="683"/>
    </location>
</feature>
<feature type="region of interest" description="Disordered" evidence="1">
    <location>
        <begin position="965"/>
        <end position="1019"/>
    </location>
</feature>
<feature type="compositionally biased region" description="Acidic residues" evidence="1">
    <location>
        <begin position="17"/>
        <end position="30"/>
    </location>
</feature>
<feature type="compositionally biased region" description="Acidic residues" evidence="1">
    <location>
        <begin position="177"/>
        <end position="191"/>
    </location>
</feature>
<feature type="compositionally biased region" description="Basic and acidic residues" evidence="1">
    <location>
        <begin position="192"/>
        <end position="202"/>
    </location>
</feature>
<feature type="compositionally biased region" description="Basic and acidic residues" evidence="1">
    <location>
        <begin position="271"/>
        <end position="281"/>
    </location>
</feature>
<feature type="compositionally biased region" description="Basic and acidic residues" evidence="1">
    <location>
        <begin position="454"/>
        <end position="468"/>
    </location>
</feature>
<feature type="compositionally biased region" description="Acidic residues" evidence="1">
    <location>
        <begin position="476"/>
        <end position="486"/>
    </location>
</feature>
<feature type="compositionally biased region" description="Polar residues" evidence="1">
    <location>
        <begin position="487"/>
        <end position="503"/>
    </location>
</feature>
<feature type="compositionally biased region" description="Basic and acidic residues" evidence="1">
    <location>
        <begin position="556"/>
        <end position="580"/>
    </location>
</feature>
<feature type="compositionally biased region" description="Polar residues" evidence="1">
    <location>
        <begin position="590"/>
        <end position="607"/>
    </location>
</feature>
<feature type="compositionally biased region" description="Polar residues" evidence="1">
    <location>
        <begin position="630"/>
        <end position="658"/>
    </location>
</feature>
<feature type="compositionally biased region" description="Basic and acidic residues" evidence="1">
    <location>
        <begin position="671"/>
        <end position="681"/>
    </location>
</feature>
<feature type="modified residue" description="Phosphoserine" evidence="2">
    <location>
        <position position="604"/>
    </location>
</feature>
<feature type="modified residue" description="Phosphothreonine" evidence="3">
    <location>
        <position position="645"/>
    </location>
</feature>
<feature type="mutagenesis site" description="Severe hydroxyurea (HU) sensitivity." evidence="2">
    <original>S</original>
    <variation>A</variation>
    <location>
        <position position="599"/>
    </location>
</feature>
<feature type="mutagenesis site" description="Severe hydroxyurea (HU) sensitivity." evidence="2">
    <original>S</original>
    <variation>A</variation>
    <location>
        <position position="604"/>
    </location>
</feature>
<feature type="mutagenesis site" description="Severe hydroxyurea (HU) sensitivity." evidence="2">
    <original>S</original>
    <variation>A</variation>
    <location>
        <position position="614"/>
    </location>
</feature>
<feature type="mutagenesis site" description="Hydroxyurea (HU) sensitivity." evidence="2">
    <original>T</original>
    <variation>A</variation>
    <location>
        <position position="634"/>
    </location>
</feature>
<feature type="mutagenesis site" description="Hydroxyurea (HU) sensitivity." evidence="2">
    <original>S</original>
    <variation>A</variation>
    <location>
        <position position="637"/>
    </location>
</feature>
<feature type="mutagenesis site" description="Hydroxyurea (HU) sensitivity." evidence="2">
    <original>T</original>
    <variation>A</variation>
    <location>
        <position position="645"/>
    </location>
</feature>
<dbReference type="EMBL" id="CU329670">
    <property type="protein sequence ID" value="CAB71844.1"/>
    <property type="molecule type" value="Genomic_DNA"/>
</dbReference>
<dbReference type="PIR" id="T50251">
    <property type="entry name" value="T50251"/>
</dbReference>
<dbReference type="RefSeq" id="NP_594486.1">
    <property type="nucleotide sequence ID" value="NM_001019915.2"/>
</dbReference>
<dbReference type="SMR" id="Q9P7T4"/>
<dbReference type="BioGRID" id="279668">
    <property type="interactions" value="124"/>
</dbReference>
<dbReference type="ELM" id="Q9P7T4"/>
<dbReference type="FunCoup" id="Q9P7T4">
    <property type="interactions" value="139"/>
</dbReference>
<dbReference type="IntAct" id="Q9P7T4">
    <property type="interactions" value="1"/>
</dbReference>
<dbReference type="MINT" id="Q9P7T4"/>
<dbReference type="STRING" id="284812.Q9P7T4"/>
<dbReference type="iPTMnet" id="Q9P7T4"/>
<dbReference type="PaxDb" id="4896-SPAC694.06c.1"/>
<dbReference type="EnsemblFungi" id="SPAC694.06c.1">
    <property type="protein sequence ID" value="SPAC694.06c.1:pep"/>
    <property type="gene ID" value="SPAC694.06c"/>
</dbReference>
<dbReference type="GeneID" id="2543240"/>
<dbReference type="KEGG" id="spo:2543240"/>
<dbReference type="PomBase" id="SPAC694.06c">
    <property type="gene designation" value="mrc1"/>
</dbReference>
<dbReference type="VEuPathDB" id="FungiDB:SPAC694.06c"/>
<dbReference type="eggNOG" id="ENOG502QSP5">
    <property type="taxonomic scope" value="Eukaryota"/>
</dbReference>
<dbReference type="HOGENOM" id="CLU_301308_0_0_1"/>
<dbReference type="InParanoid" id="Q9P7T4"/>
<dbReference type="OMA" id="NPHEIRE"/>
<dbReference type="PhylomeDB" id="Q9P7T4"/>
<dbReference type="Reactome" id="R-SPO-176187">
    <property type="pathway name" value="Activation of ATR in response to replication stress"/>
</dbReference>
<dbReference type="Reactome" id="R-SPO-5689880">
    <property type="pathway name" value="Ub-specific processing proteases"/>
</dbReference>
<dbReference type="PRO" id="PR:Q9P7T4"/>
<dbReference type="Proteomes" id="UP000002485">
    <property type="component" value="Chromosome I"/>
</dbReference>
<dbReference type="GO" id="GO:0000785">
    <property type="term" value="C:chromatin"/>
    <property type="evidence" value="ECO:0000314"/>
    <property type="project" value="PomBase"/>
</dbReference>
<dbReference type="GO" id="GO:0005634">
    <property type="term" value="C:nucleus"/>
    <property type="evidence" value="ECO:0000314"/>
    <property type="project" value="PomBase"/>
</dbReference>
<dbReference type="GO" id="GO:0031298">
    <property type="term" value="C:replication fork protection complex"/>
    <property type="evidence" value="ECO:0000266"/>
    <property type="project" value="PomBase"/>
</dbReference>
<dbReference type="GO" id="GO:0070337">
    <property type="term" value="F:3'-flap-structured DNA binding"/>
    <property type="evidence" value="ECO:0000314"/>
    <property type="project" value="PomBase"/>
</dbReference>
<dbReference type="GO" id="GO:0010997">
    <property type="term" value="F:anaphase-promoting complex binding"/>
    <property type="evidence" value="ECO:0000318"/>
    <property type="project" value="GO_Central"/>
</dbReference>
<dbReference type="GO" id="GO:0000405">
    <property type="term" value="F:bubble DNA binding"/>
    <property type="evidence" value="ECO:0000314"/>
    <property type="project" value="PomBase"/>
</dbReference>
<dbReference type="GO" id="GO:0062037">
    <property type="term" value="F:D-loop DNA binding"/>
    <property type="evidence" value="ECO:0000314"/>
    <property type="project" value="PomBase"/>
</dbReference>
<dbReference type="GO" id="GO:0003690">
    <property type="term" value="F:double-stranded DNA binding"/>
    <property type="evidence" value="ECO:0000314"/>
    <property type="project" value="PomBase"/>
</dbReference>
<dbReference type="GO" id="GO:0035591">
    <property type="term" value="F:signaling adaptor activity"/>
    <property type="evidence" value="ECO:0000316"/>
    <property type="project" value="PomBase"/>
</dbReference>
<dbReference type="GO" id="GO:0000403">
    <property type="term" value="F:Y-form DNA binding"/>
    <property type="evidence" value="ECO:0000314"/>
    <property type="project" value="PomBase"/>
</dbReference>
<dbReference type="GO" id="GO:0033314">
    <property type="term" value="P:mitotic DNA replication checkpoint signaling"/>
    <property type="evidence" value="ECO:0000315"/>
    <property type="project" value="PomBase"/>
</dbReference>
<dbReference type="GO" id="GO:1902975">
    <property type="term" value="P:mitotic DNA replication initiation"/>
    <property type="evidence" value="ECO:0000315"/>
    <property type="project" value="PomBase"/>
</dbReference>
<dbReference type="GO" id="GO:0007095">
    <property type="term" value="P:mitotic G2 DNA damage checkpoint signaling"/>
    <property type="evidence" value="ECO:0000318"/>
    <property type="project" value="GO_Central"/>
</dbReference>
<dbReference type="GO" id="GO:0031573">
    <property type="term" value="P:mitotic intra-S DNA damage checkpoint signaling"/>
    <property type="evidence" value="ECO:0000315"/>
    <property type="project" value="PomBase"/>
</dbReference>
<dbReference type="GO" id="GO:0011000">
    <property type="term" value="P:replication fork arrest at mating type locus"/>
    <property type="evidence" value="ECO:0000315"/>
    <property type="project" value="PomBase"/>
</dbReference>
<dbReference type="GO" id="GO:0031582">
    <property type="term" value="P:replication fork arrest at rDNA repeats"/>
    <property type="evidence" value="ECO:0000315"/>
    <property type="project" value="PomBase"/>
</dbReference>
<dbReference type="GO" id="GO:0090001">
    <property type="term" value="P:replication fork arrest at tRNA locus"/>
    <property type="evidence" value="ECO:0000315"/>
    <property type="project" value="PomBase"/>
</dbReference>
<dbReference type="InterPro" id="IPR024146">
    <property type="entry name" value="Claspin"/>
</dbReference>
<dbReference type="InterPro" id="IPR018564">
    <property type="entry name" value="Repl_chkpnt_MRC1_dom"/>
</dbReference>
<dbReference type="PANTHER" id="PTHR14396">
    <property type="entry name" value="CLASPIN"/>
    <property type="match status" value="1"/>
</dbReference>
<dbReference type="PANTHER" id="PTHR14396:SF10">
    <property type="entry name" value="CLASPIN"/>
    <property type="match status" value="1"/>
</dbReference>
<dbReference type="Pfam" id="PF09444">
    <property type="entry name" value="MRC1"/>
    <property type="match status" value="1"/>
</dbReference>
<proteinExistence type="evidence at protein level"/>
<evidence type="ECO:0000256" key="1">
    <source>
        <dbReference type="SAM" id="MobiDB-lite"/>
    </source>
</evidence>
<evidence type="ECO:0000269" key="2">
    <source>
    </source>
</evidence>
<evidence type="ECO:0000305" key="3">
    <source>
    </source>
</evidence>
<gene>
    <name type="primary">mrc1</name>
    <name type="ORF">SPAC694.06c</name>
</gene>
<organism>
    <name type="scientific">Schizosaccharomyces pombe (strain 972 / ATCC 24843)</name>
    <name type="common">Fission yeast</name>
    <dbReference type="NCBI Taxonomy" id="284812"/>
    <lineage>
        <taxon>Eukaryota</taxon>
        <taxon>Fungi</taxon>
        <taxon>Dikarya</taxon>
        <taxon>Ascomycota</taxon>
        <taxon>Taphrinomycotina</taxon>
        <taxon>Schizosaccharomycetes</taxon>
        <taxon>Schizosaccharomycetales</taxon>
        <taxon>Schizosaccharomycetaceae</taxon>
        <taxon>Schizosaccharomyces</taxon>
    </lineage>
</organism>
<accession>Q9P7T4</accession>
<protein>
    <recommendedName>
        <fullName>Mediator of replication checkpoint protein 1</fullName>
    </recommendedName>
    <alternativeName>
        <fullName>DNA replication checkpoint mediator mrc1</fullName>
    </alternativeName>
</protein>